<sequence length="787" mass="85529">MISTRLARAGALAPKSRLFLGTRAFATVGDSPLDKKVEMANTEKGNYINYKKMSENLDIVRRRLQRPLTYAEKVLYSHLDDPHGQEIERGKSYLKLRPDRVACQDATAQMAILQFMSAGMPSVATPTTVHCDHLIEAQVGGDKDLARANEINKEVYDFLASATAKYNIGFWKPGSGIIHQIVLENYAFPGGLMIGTDSHTPNAGGLAMAAIGVGGADAVDVMAGLPWELKAPKVIGVKLTGEMSGWTTPKDVILKVAGLLTVKGGTGAIIEYHGPGVTSLSCTGMGTICNMGAEIGATTSMFPFNDRMYDYLKATKRQHIGDFAREYAKELREDEGAEYDQLIEINLSELEPHINGPFTPDLATPISKFKEAVETNKWPEELKVGLIGSCTNSSYEDMSRAASIARDALNHGLKAKSLFTVTPGSEQIRATIERDGQLQTLEEFGGVILANACGPCIGQWDRRDVKKGEPNSIISSYNRNFTGRNDANPATHAFVASPDLVVAMTIAGTLKFNPLTDKLKDKDGNEFLLQPPTGEGLPAKGYDPGRDTYQAPPADRSSVNVAVSPTSDRLQLLAGFEPWDGKDANGIPILIKCQGKTTTDHISMAGPWLKYRGHLDNISNNMLIGAVNAENGKANSVKNKFTGEYDAVPATARDYKARGVKWVVIGDWNYGEGSSREHAALEPRHLGGLAIITRSFARIHETNLKKQGMLPLTFADPADYDKINPEDTVDLLCTQLEVGKPMTLRVHPKDGSAPFDISLNHTFNESQIEWFKDGSALNTMARKSGAK</sequence>
<gene>
    <name type="primary">acoA</name>
    <name type="ORF">Afu6g12930</name>
</gene>
<dbReference type="EC" id="4.2.1.3" evidence="4"/>
<dbReference type="EC" id="4.2.1.-" evidence="4"/>
<dbReference type="EMBL" id="AAHF01000006">
    <property type="protein sequence ID" value="EAL89133.1"/>
    <property type="molecule type" value="Genomic_DNA"/>
</dbReference>
<dbReference type="RefSeq" id="XP_751171.1">
    <property type="nucleotide sequence ID" value="XM_746078.1"/>
</dbReference>
<dbReference type="SMR" id="Q4WLN1"/>
<dbReference type="FunCoup" id="Q4WLN1">
    <property type="interactions" value="901"/>
</dbReference>
<dbReference type="STRING" id="330879.Q4WLN1"/>
<dbReference type="SwissPalm" id="Q4WLN1"/>
<dbReference type="EnsemblFungi" id="EAL89133">
    <property type="protein sequence ID" value="EAL89133"/>
    <property type="gene ID" value="AFUA_6G12930"/>
</dbReference>
<dbReference type="GeneID" id="3508478"/>
<dbReference type="KEGG" id="afm:AFUA_6G12930"/>
<dbReference type="VEuPathDB" id="FungiDB:Afu6g12930"/>
<dbReference type="eggNOG" id="KOG0453">
    <property type="taxonomic scope" value="Eukaryota"/>
</dbReference>
<dbReference type="HOGENOM" id="CLU_006714_2_2_1"/>
<dbReference type="InParanoid" id="Q4WLN1"/>
<dbReference type="OMA" id="KKQGMLG"/>
<dbReference type="OrthoDB" id="2224430at2759"/>
<dbReference type="UniPathway" id="UPA00033">
    <property type="reaction ID" value="UER00029"/>
</dbReference>
<dbReference type="UniPathway" id="UPA00223">
    <property type="reaction ID" value="UER00718"/>
</dbReference>
<dbReference type="Proteomes" id="UP000002530">
    <property type="component" value="Chromosome 6"/>
</dbReference>
<dbReference type="GO" id="GO:0005829">
    <property type="term" value="C:cytosol"/>
    <property type="evidence" value="ECO:0000318"/>
    <property type="project" value="GO_Central"/>
</dbReference>
<dbReference type="GO" id="GO:0042645">
    <property type="term" value="C:mitochondrial nucleoid"/>
    <property type="evidence" value="ECO:0007669"/>
    <property type="project" value="EnsemblFungi"/>
</dbReference>
<dbReference type="GO" id="GO:0005739">
    <property type="term" value="C:mitochondrion"/>
    <property type="evidence" value="ECO:0000318"/>
    <property type="project" value="GO_Central"/>
</dbReference>
<dbReference type="GO" id="GO:0051539">
    <property type="term" value="F:4 iron, 4 sulfur cluster binding"/>
    <property type="evidence" value="ECO:0000318"/>
    <property type="project" value="GO_Central"/>
</dbReference>
<dbReference type="GO" id="GO:0003994">
    <property type="term" value="F:aconitate hydratase activity"/>
    <property type="evidence" value="ECO:0000314"/>
    <property type="project" value="AspGD"/>
</dbReference>
<dbReference type="GO" id="GO:0003690">
    <property type="term" value="F:double-stranded DNA binding"/>
    <property type="evidence" value="ECO:0007669"/>
    <property type="project" value="EnsemblFungi"/>
</dbReference>
<dbReference type="GO" id="GO:0046872">
    <property type="term" value="F:metal ion binding"/>
    <property type="evidence" value="ECO:0007669"/>
    <property type="project" value="UniProtKB-KW"/>
</dbReference>
<dbReference type="GO" id="GO:0003729">
    <property type="term" value="F:mRNA binding"/>
    <property type="evidence" value="ECO:0007669"/>
    <property type="project" value="EnsemblFungi"/>
</dbReference>
<dbReference type="GO" id="GO:0003697">
    <property type="term" value="F:single-stranded DNA binding"/>
    <property type="evidence" value="ECO:0007669"/>
    <property type="project" value="EnsemblFungi"/>
</dbReference>
<dbReference type="GO" id="GO:0019878">
    <property type="term" value="P:lysine biosynthetic process via aminoadipic acid"/>
    <property type="evidence" value="ECO:0007669"/>
    <property type="project" value="UniProtKB-UniPathway"/>
</dbReference>
<dbReference type="GO" id="GO:0000002">
    <property type="term" value="P:mitochondrial genome maintenance"/>
    <property type="evidence" value="ECO:0007669"/>
    <property type="project" value="EnsemblFungi"/>
</dbReference>
<dbReference type="GO" id="GO:0006099">
    <property type="term" value="P:tricarboxylic acid cycle"/>
    <property type="evidence" value="ECO:0000318"/>
    <property type="project" value="GO_Central"/>
</dbReference>
<dbReference type="CDD" id="cd01584">
    <property type="entry name" value="AcnA_Mitochondrial"/>
    <property type="match status" value="1"/>
</dbReference>
<dbReference type="FunFam" id="3.20.19.10:FF:000002">
    <property type="entry name" value="Aconitate hydratase, mitochondrial"/>
    <property type="match status" value="1"/>
</dbReference>
<dbReference type="FunFam" id="3.30.499.10:FF:000003">
    <property type="entry name" value="Aconitate hydratase, mitochondrial"/>
    <property type="match status" value="1"/>
</dbReference>
<dbReference type="FunFam" id="3.30.499.10:FF:000004">
    <property type="entry name" value="Aconitate hydratase, mitochondrial"/>
    <property type="match status" value="1"/>
</dbReference>
<dbReference type="FunFam" id="3.40.1060.10:FF:000001">
    <property type="entry name" value="Aconitate hydratase, mitochondrial"/>
    <property type="match status" value="1"/>
</dbReference>
<dbReference type="Gene3D" id="3.40.1060.10">
    <property type="entry name" value="Aconitase, Domain 2"/>
    <property type="match status" value="1"/>
</dbReference>
<dbReference type="Gene3D" id="3.30.499.10">
    <property type="entry name" value="Aconitase, domain 3"/>
    <property type="match status" value="2"/>
</dbReference>
<dbReference type="Gene3D" id="3.20.19.10">
    <property type="entry name" value="Aconitase, domain 4"/>
    <property type="match status" value="1"/>
</dbReference>
<dbReference type="InterPro" id="IPR015931">
    <property type="entry name" value="Acnase/IPM_dHydase_lsu_aba_1/3"/>
</dbReference>
<dbReference type="InterPro" id="IPR001030">
    <property type="entry name" value="Acoase/IPM_deHydtase_lsu_aba"/>
</dbReference>
<dbReference type="InterPro" id="IPR015928">
    <property type="entry name" value="Aconitase/3IPM_dehydase_swvl"/>
</dbReference>
<dbReference type="InterPro" id="IPR050926">
    <property type="entry name" value="Aconitase/IPM_isomerase"/>
</dbReference>
<dbReference type="InterPro" id="IPR018136">
    <property type="entry name" value="Aconitase_4Fe-4S_BS"/>
</dbReference>
<dbReference type="InterPro" id="IPR036008">
    <property type="entry name" value="Aconitase_4Fe-4S_dom"/>
</dbReference>
<dbReference type="InterPro" id="IPR015932">
    <property type="entry name" value="Aconitase_dom2"/>
</dbReference>
<dbReference type="InterPro" id="IPR006248">
    <property type="entry name" value="Aconitase_mito-like"/>
</dbReference>
<dbReference type="InterPro" id="IPR000573">
    <property type="entry name" value="AconitaseA/IPMdHydase_ssu_swvl"/>
</dbReference>
<dbReference type="NCBIfam" id="TIGR01340">
    <property type="entry name" value="aconitase_mito"/>
    <property type="match status" value="1"/>
</dbReference>
<dbReference type="NCBIfam" id="NF005558">
    <property type="entry name" value="PRK07229.1"/>
    <property type="match status" value="1"/>
</dbReference>
<dbReference type="PANTHER" id="PTHR43160">
    <property type="entry name" value="ACONITATE HYDRATASE B"/>
    <property type="match status" value="1"/>
</dbReference>
<dbReference type="PANTHER" id="PTHR43160:SF3">
    <property type="entry name" value="ACONITATE HYDRATASE, MITOCHONDRIAL"/>
    <property type="match status" value="1"/>
</dbReference>
<dbReference type="Pfam" id="PF00330">
    <property type="entry name" value="Aconitase"/>
    <property type="match status" value="1"/>
</dbReference>
<dbReference type="Pfam" id="PF00694">
    <property type="entry name" value="Aconitase_C"/>
    <property type="match status" value="1"/>
</dbReference>
<dbReference type="PRINTS" id="PR00415">
    <property type="entry name" value="ACONITASE"/>
</dbReference>
<dbReference type="SUPFAM" id="SSF53732">
    <property type="entry name" value="Aconitase iron-sulfur domain"/>
    <property type="match status" value="1"/>
</dbReference>
<dbReference type="SUPFAM" id="SSF52016">
    <property type="entry name" value="LeuD/IlvD-like"/>
    <property type="match status" value="1"/>
</dbReference>
<dbReference type="PROSITE" id="PS00450">
    <property type="entry name" value="ACONITASE_1"/>
    <property type="match status" value="1"/>
</dbReference>
<dbReference type="PROSITE" id="PS01244">
    <property type="entry name" value="ACONITASE_2"/>
    <property type="match status" value="1"/>
</dbReference>
<reference key="1">
    <citation type="journal article" date="2005" name="Nature">
        <title>Genomic sequence of the pathogenic and allergenic filamentous fungus Aspergillus fumigatus.</title>
        <authorList>
            <person name="Nierman W.C."/>
            <person name="Pain A."/>
            <person name="Anderson M.J."/>
            <person name="Wortman J.R."/>
            <person name="Kim H.S."/>
            <person name="Arroyo J."/>
            <person name="Berriman M."/>
            <person name="Abe K."/>
            <person name="Archer D.B."/>
            <person name="Bermejo C."/>
            <person name="Bennett J.W."/>
            <person name="Bowyer P."/>
            <person name="Chen D."/>
            <person name="Collins M."/>
            <person name="Coulsen R."/>
            <person name="Davies R."/>
            <person name="Dyer P.S."/>
            <person name="Farman M.L."/>
            <person name="Fedorova N."/>
            <person name="Fedorova N.D."/>
            <person name="Feldblyum T.V."/>
            <person name="Fischer R."/>
            <person name="Fosker N."/>
            <person name="Fraser A."/>
            <person name="Garcia J.L."/>
            <person name="Garcia M.J."/>
            <person name="Goble A."/>
            <person name="Goldman G.H."/>
            <person name="Gomi K."/>
            <person name="Griffith-Jones S."/>
            <person name="Gwilliam R."/>
            <person name="Haas B.J."/>
            <person name="Haas H."/>
            <person name="Harris D.E."/>
            <person name="Horiuchi H."/>
            <person name="Huang J."/>
            <person name="Humphray S."/>
            <person name="Jimenez J."/>
            <person name="Keller N."/>
            <person name="Khouri H."/>
            <person name="Kitamoto K."/>
            <person name="Kobayashi T."/>
            <person name="Konzack S."/>
            <person name="Kulkarni R."/>
            <person name="Kumagai T."/>
            <person name="Lafton A."/>
            <person name="Latge J.-P."/>
            <person name="Li W."/>
            <person name="Lord A."/>
            <person name="Lu C."/>
            <person name="Majoros W.H."/>
            <person name="May G.S."/>
            <person name="Miller B.L."/>
            <person name="Mohamoud Y."/>
            <person name="Molina M."/>
            <person name="Monod M."/>
            <person name="Mouyna I."/>
            <person name="Mulligan S."/>
            <person name="Murphy L.D."/>
            <person name="O'Neil S."/>
            <person name="Paulsen I."/>
            <person name="Penalva M.A."/>
            <person name="Pertea M."/>
            <person name="Price C."/>
            <person name="Pritchard B.L."/>
            <person name="Quail M.A."/>
            <person name="Rabbinowitsch E."/>
            <person name="Rawlins N."/>
            <person name="Rajandream M.A."/>
            <person name="Reichard U."/>
            <person name="Renauld H."/>
            <person name="Robson G.D."/>
            <person name="Rodriguez de Cordoba S."/>
            <person name="Rodriguez-Pena J.M."/>
            <person name="Ronning C.M."/>
            <person name="Rutter S."/>
            <person name="Salzberg S.L."/>
            <person name="Sanchez M."/>
            <person name="Sanchez-Ferrero J.C."/>
            <person name="Saunders D."/>
            <person name="Seeger K."/>
            <person name="Squares R."/>
            <person name="Squares S."/>
            <person name="Takeuchi M."/>
            <person name="Tekaia F."/>
            <person name="Turner G."/>
            <person name="Vazquez de Aldana C.R."/>
            <person name="Weidman J."/>
            <person name="White O."/>
            <person name="Woodward J.R."/>
            <person name="Yu J.-H."/>
            <person name="Fraser C.M."/>
            <person name="Galagan J.E."/>
            <person name="Asai K."/>
            <person name="Machida M."/>
            <person name="Hall N."/>
            <person name="Barrell B.G."/>
            <person name="Denning D.W."/>
        </authorList>
    </citation>
    <scope>NUCLEOTIDE SEQUENCE [LARGE SCALE GENOMIC DNA]</scope>
    <source>
        <strain>ATCC MYA-4609 / CBS 101355 / FGSC A1100 / Af293</strain>
    </source>
</reference>
<reference key="2">
    <citation type="journal article" date="2012" name="Mol. Microbiol.">
        <title>The fungal alpha-aminoadipate pathway for lysine biosynthesis requires two enzymes of the aconitase family for the isomerization of homocitrate to homoisocitrate.</title>
        <authorList>
            <person name="Fazius F."/>
            <person name="Shelest E."/>
            <person name="Gebhardt P."/>
            <person name="Brock M."/>
        </authorList>
    </citation>
    <scope>FUNCTION</scope>
    <scope>INDUCTION</scope>
    <scope>IDENTIFICATION BY MASS SPECTROMETRY</scope>
    <scope>DISRUPTION PHENOTYPE</scope>
    <scope>CATALYTIC ACTIVITY</scope>
    <scope>MISCELLANEOUS</scope>
</reference>
<name>ACON_ASPFU</name>
<comment type="function">
    <text evidence="4">Catalyzes the isomerization of citrate to isocitrate via cis-aconitate, a step in the citric acid cycle. Also catalyzes the reversible dehydration of (R)-homocitrate to cis-homoaconitate, a step in the alpha-aminoadipate pathway for lysine biosynthesis.</text>
</comment>
<comment type="catalytic activity">
    <reaction evidence="4">
        <text>citrate = D-threo-isocitrate</text>
        <dbReference type="Rhea" id="RHEA:10336"/>
        <dbReference type="ChEBI" id="CHEBI:15562"/>
        <dbReference type="ChEBI" id="CHEBI:16947"/>
        <dbReference type="EC" id="4.2.1.3"/>
    </reaction>
</comment>
<comment type="catalytic activity">
    <reaction evidence="4">
        <text>(2R)-homocitrate = cis-homoaconitate + H2O</text>
        <dbReference type="Rhea" id="RHEA:26101"/>
        <dbReference type="ChEBI" id="CHEBI:15377"/>
        <dbReference type="ChEBI" id="CHEBI:58174"/>
        <dbReference type="ChEBI" id="CHEBI:58884"/>
    </reaction>
</comment>
<comment type="cofactor">
    <cofactor evidence="1">
        <name>[4Fe-4S] cluster</name>
        <dbReference type="ChEBI" id="CHEBI:49883"/>
    </cofactor>
    <text evidence="1">Binds 1 [4Fe-4S] cluster per subunit.</text>
</comment>
<comment type="pathway">
    <text>Carbohydrate metabolism; tricarboxylic acid cycle; isocitrate from oxaloacetate: step 2/2.</text>
</comment>
<comment type="pathway">
    <text>Amino-acid biosynthesis; L-lysine biosynthesis via AAA pathway; L-alpha-aminoadipate from 2-oxoglutarate: step 2/5.</text>
</comment>
<comment type="subcellular location">
    <subcellularLocation>
        <location evidence="1">Mitochondrion</location>
    </subcellularLocation>
</comment>
<comment type="induction">
    <text evidence="4">Constitutively expressed on glucose medium and increased expression on ethanol.</text>
</comment>
<comment type="disruption phenotype">
    <text evidence="4">Essential for growth.</text>
</comment>
<comment type="miscellaneous">
    <text evidence="6">The fermenting yeast S.cerevisiae has 2 aconitases, ACO1 essential for the citric acid cycle, and ACO2 specifically and exclusively contributing to lysine biosynthesis. In contrast, in respiring filamentous fungi the ACO2 homologs (acoB) seem enzymatically inactive and the ACO1 homolog (acoA) is solely responsible for these functions.</text>
</comment>
<comment type="similarity">
    <text evidence="5">Belongs to the aconitase/IPM isomerase family.</text>
</comment>
<keyword id="KW-0028">Amino-acid biosynthesis</keyword>
<keyword id="KW-0408">Iron</keyword>
<keyword id="KW-0411">Iron-sulfur</keyword>
<keyword id="KW-0456">Lyase</keyword>
<keyword id="KW-0457">Lysine biosynthesis</keyword>
<keyword id="KW-0479">Metal-binding</keyword>
<keyword id="KW-0496">Mitochondrion</keyword>
<keyword id="KW-1185">Reference proteome</keyword>
<keyword id="KW-0809">Transit peptide</keyword>
<keyword id="KW-0816">Tricarboxylic acid cycle</keyword>
<proteinExistence type="evidence at protein level"/>
<evidence type="ECO:0000250" key="1"/>
<evidence type="ECO:0000255" key="2"/>
<evidence type="ECO:0000256" key="3">
    <source>
        <dbReference type="SAM" id="MobiDB-lite"/>
    </source>
</evidence>
<evidence type="ECO:0000269" key="4">
    <source>
    </source>
</evidence>
<evidence type="ECO:0000305" key="5"/>
<evidence type="ECO:0000305" key="6">
    <source>
    </source>
</evidence>
<accession>Q4WLN1</accession>
<organism>
    <name type="scientific">Aspergillus fumigatus (strain ATCC MYA-4609 / CBS 101355 / FGSC A1100 / Af293)</name>
    <name type="common">Neosartorya fumigata</name>
    <dbReference type="NCBI Taxonomy" id="330879"/>
    <lineage>
        <taxon>Eukaryota</taxon>
        <taxon>Fungi</taxon>
        <taxon>Dikarya</taxon>
        <taxon>Ascomycota</taxon>
        <taxon>Pezizomycotina</taxon>
        <taxon>Eurotiomycetes</taxon>
        <taxon>Eurotiomycetidae</taxon>
        <taxon>Eurotiales</taxon>
        <taxon>Aspergillaceae</taxon>
        <taxon>Aspergillus</taxon>
        <taxon>Aspergillus subgen. Fumigati</taxon>
    </lineage>
</organism>
<protein>
    <recommendedName>
        <fullName>Aconitate hydratase, mitochondrial</fullName>
        <shortName>Aconitase</shortName>
        <ecNumber evidence="4">4.2.1.3</ecNumber>
    </recommendedName>
    <alternativeName>
        <fullName>Citrate hydro-lyase</fullName>
    </alternativeName>
    <alternativeName>
        <fullName>Homocitrate dehydratase</fullName>
        <ecNumber evidence="4">4.2.1.-</ecNumber>
    </alternativeName>
</protein>
<feature type="transit peptide" description="Mitochondrion" evidence="2">
    <location>
        <begin position="1"/>
        <end position="33"/>
    </location>
</feature>
<feature type="chain" id="PRO_0000425361" description="Aconitate hydratase, mitochondrial">
    <location>
        <begin position="34"/>
        <end position="787"/>
    </location>
</feature>
<feature type="region of interest" description="Disordered" evidence="3">
    <location>
        <begin position="529"/>
        <end position="559"/>
    </location>
</feature>
<feature type="binding site" evidence="1">
    <location>
        <position position="104"/>
    </location>
    <ligand>
        <name>substrate</name>
    </ligand>
</feature>
<feature type="binding site" evidence="1">
    <location>
        <begin position="197"/>
        <end position="199"/>
    </location>
    <ligand>
        <name>substrate</name>
    </ligand>
</feature>
<feature type="binding site" evidence="1">
    <location>
        <position position="390"/>
    </location>
    <ligand>
        <name>[4Fe-4S] cluster</name>
        <dbReference type="ChEBI" id="CHEBI:49883"/>
    </ligand>
</feature>
<feature type="binding site" evidence="1">
    <location>
        <position position="453"/>
    </location>
    <ligand>
        <name>[4Fe-4S] cluster</name>
        <dbReference type="ChEBI" id="CHEBI:49883"/>
    </ligand>
</feature>
<feature type="binding site" evidence="1">
    <location>
        <position position="456"/>
    </location>
    <ligand>
        <name>[4Fe-4S] cluster</name>
        <dbReference type="ChEBI" id="CHEBI:49883"/>
    </ligand>
</feature>
<feature type="binding site" evidence="1">
    <location>
        <position position="479"/>
    </location>
    <ligand>
        <name>substrate</name>
    </ligand>
</feature>
<feature type="binding site" evidence="1">
    <location>
        <position position="484"/>
    </location>
    <ligand>
        <name>substrate</name>
    </ligand>
</feature>
<feature type="binding site" evidence="1">
    <location>
        <position position="612"/>
    </location>
    <ligand>
        <name>substrate</name>
    </ligand>
</feature>
<feature type="binding site" evidence="1">
    <location>
        <begin position="675"/>
        <end position="676"/>
    </location>
    <ligand>
        <name>substrate</name>
    </ligand>
</feature>